<sequence length="514" mass="55544">MDSDTLSGLLENVAKKFPDRRALSVSGKFNLTHARLHDLIERAASRLVSDAGIKPGDVVALTFPNTVEFVIMFLAVIRARATAAPLNAAYTAEEFEFYLSDSDSKLLLTSKEGNAPAQEAASKLKISHVTATLLDAGSDLVLSVADSDSVVDSATELVNHPDDGALFLHTSGTTSRPKGVPLTQLNLASSVKNIKAVYKLTESDSTVIVLPLFHVHGLLAGLLSSLGAGAAVTLPAAGRFSATTFWPDMKKYNATWYTAVPTIHQIILDRHASHPETEYPKLRFIRSCSASLAPVILSRLEEAFGAPVLEAYAMTEATHLMSSNPLPEEGPHKPGSVGKPVGQEMAILNEKGEIQEPNNKGEVCIRGPNVTKGYKNNPEANKAGFEFGWFHTGDIGYFDTDGYLHLVGRIKELINRGGEKISPIEVDAVLLTHPDVSQGVAFGVPDEKYGEEINCAVIPREGTTVTEEDIKAFCKKNLAAFKVPKRVFITDNLPKTASGKIQRRIVAQHFLEKP</sequence>
<evidence type="ECO:0000250" key="1">
    <source>
        <dbReference type="UniProtKB" id="O24146"/>
    </source>
</evidence>
<evidence type="ECO:0000250" key="2">
    <source>
        <dbReference type="UniProtKB" id="Q42524"/>
    </source>
</evidence>
<evidence type="ECO:0000269" key="3">
    <source>
    </source>
</evidence>
<evidence type="ECO:0000269" key="4">
    <source>
    </source>
</evidence>
<evidence type="ECO:0000303" key="5">
    <source>
    </source>
</evidence>
<evidence type="ECO:0000303" key="6">
    <source>
    </source>
</evidence>
<evidence type="ECO:0000305" key="7"/>
<evidence type="ECO:0000305" key="8">
    <source>
    </source>
</evidence>
<evidence type="ECO:0000312" key="9">
    <source>
        <dbReference type="Araport" id="AT3G48990"/>
    </source>
</evidence>
<evidence type="ECO:0000312" key="10">
    <source>
        <dbReference type="EMBL" id="CAB62011.1"/>
    </source>
</evidence>
<evidence type="ECO:0007744" key="11">
    <source>
        <dbReference type="PDB" id="5IE2"/>
    </source>
</evidence>
<evidence type="ECO:0007744" key="12">
    <source>
        <dbReference type="PDB" id="5IE3"/>
    </source>
</evidence>
<evidence type="ECO:0007744" key="13">
    <source>
    </source>
</evidence>
<evidence type="ECO:0007829" key="14">
    <source>
        <dbReference type="PDB" id="5IE2"/>
    </source>
</evidence>
<reference key="1">
    <citation type="journal article" date="2002" name="Plant Physiol.">
        <title>Arabidopsis contains nine long-chain acyl-coenzyme A synthetase genes that participate in fatty acid and glycerolipid metabolism.</title>
        <authorList>
            <person name="Shockey J.M."/>
            <person name="Fulda M.S."/>
            <person name="Browse J.A."/>
        </authorList>
    </citation>
    <scope>NUCLEOTIDE SEQUENCE [MRNA]</scope>
</reference>
<reference key="2">
    <citation type="journal article" date="2000" name="Nature">
        <title>Sequence and analysis of chromosome 3 of the plant Arabidopsis thaliana.</title>
        <authorList>
            <person name="Salanoubat M."/>
            <person name="Lemcke K."/>
            <person name="Rieger M."/>
            <person name="Ansorge W."/>
            <person name="Unseld M."/>
            <person name="Fartmann B."/>
            <person name="Valle G."/>
            <person name="Bloecker H."/>
            <person name="Perez-Alonso M."/>
            <person name="Obermaier B."/>
            <person name="Delseny M."/>
            <person name="Boutry M."/>
            <person name="Grivell L.A."/>
            <person name="Mache R."/>
            <person name="Puigdomenech P."/>
            <person name="De Simone V."/>
            <person name="Choisne N."/>
            <person name="Artiguenave F."/>
            <person name="Robert C."/>
            <person name="Brottier P."/>
            <person name="Wincker P."/>
            <person name="Cattolico L."/>
            <person name="Weissenbach J."/>
            <person name="Saurin W."/>
            <person name="Quetier F."/>
            <person name="Schaefer M."/>
            <person name="Mueller-Auer S."/>
            <person name="Gabel C."/>
            <person name="Fuchs M."/>
            <person name="Benes V."/>
            <person name="Wurmbach E."/>
            <person name="Drzonek H."/>
            <person name="Erfle H."/>
            <person name="Jordan N."/>
            <person name="Bangert S."/>
            <person name="Wiedelmann R."/>
            <person name="Kranz H."/>
            <person name="Voss H."/>
            <person name="Holland R."/>
            <person name="Brandt P."/>
            <person name="Nyakatura G."/>
            <person name="Vezzi A."/>
            <person name="D'Angelo M."/>
            <person name="Pallavicini A."/>
            <person name="Toppo S."/>
            <person name="Simionati B."/>
            <person name="Conrad A."/>
            <person name="Hornischer K."/>
            <person name="Kauer G."/>
            <person name="Loehnert T.-H."/>
            <person name="Nordsiek G."/>
            <person name="Reichelt J."/>
            <person name="Scharfe M."/>
            <person name="Schoen O."/>
            <person name="Bargues M."/>
            <person name="Terol J."/>
            <person name="Climent J."/>
            <person name="Navarro P."/>
            <person name="Collado C."/>
            <person name="Perez-Perez A."/>
            <person name="Ottenwaelder B."/>
            <person name="Duchemin D."/>
            <person name="Cooke R."/>
            <person name="Laudie M."/>
            <person name="Berger-Llauro C."/>
            <person name="Purnelle B."/>
            <person name="Masuy D."/>
            <person name="de Haan M."/>
            <person name="Maarse A.C."/>
            <person name="Alcaraz J.-P."/>
            <person name="Cottet A."/>
            <person name="Casacuberta E."/>
            <person name="Monfort A."/>
            <person name="Argiriou A."/>
            <person name="Flores M."/>
            <person name="Liguori R."/>
            <person name="Vitale D."/>
            <person name="Mannhaupt G."/>
            <person name="Haase D."/>
            <person name="Schoof H."/>
            <person name="Rudd S."/>
            <person name="Zaccaria P."/>
            <person name="Mewes H.-W."/>
            <person name="Mayer K.F.X."/>
            <person name="Kaul S."/>
            <person name="Town C.D."/>
            <person name="Koo H.L."/>
            <person name="Tallon L.J."/>
            <person name="Jenkins J."/>
            <person name="Rooney T."/>
            <person name="Rizzo M."/>
            <person name="Walts A."/>
            <person name="Utterback T."/>
            <person name="Fujii C.Y."/>
            <person name="Shea T.P."/>
            <person name="Creasy T.H."/>
            <person name="Haas B."/>
            <person name="Maiti R."/>
            <person name="Wu D."/>
            <person name="Peterson J."/>
            <person name="Van Aken S."/>
            <person name="Pai G."/>
            <person name="Militscher J."/>
            <person name="Sellers P."/>
            <person name="Gill J.E."/>
            <person name="Feldblyum T.V."/>
            <person name="Preuss D."/>
            <person name="Lin X."/>
            <person name="Nierman W.C."/>
            <person name="Salzberg S.L."/>
            <person name="White O."/>
            <person name="Venter J.C."/>
            <person name="Fraser C.M."/>
            <person name="Kaneko T."/>
            <person name="Nakamura Y."/>
            <person name="Sato S."/>
            <person name="Kato T."/>
            <person name="Asamizu E."/>
            <person name="Sasamoto S."/>
            <person name="Kimura T."/>
            <person name="Idesawa K."/>
            <person name="Kawashima K."/>
            <person name="Kishida Y."/>
            <person name="Kiyokawa C."/>
            <person name="Kohara M."/>
            <person name="Matsumoto M."/>
            <person name="Matsuno A."/>
            <person name="Muraki A."/>
            <person name="Nakayama S."/>
            <person name="Nakazaki N."/>
            <person name="Shinpo S."/>
            <person name="Takeuchi C."/>
            <person name="Wada T."/>
            <person name="Watanabe A."/>
            <person name="Yamada M."/>
            <person name="Yasuda M."/>
            <person name="Tabata S."/>
        </authorList>
    </citation>
    <scope>NUCLEOTIDE SEQUENCE [LARGE SCALE GENOMIC DNA]</scope>
    <source>
        <strain>cv. Columbia</strain>
    </source>
</reference>
<reference key="3">
    <citation type="journal article" date="2017" name="Plant J.">
        <title>Araport11: a complete reannotation of the Arabidopsis thaliana reference genome.</title>
        <authorList>
            <person name="Cheng C.Y."/>
            <person name="Krishnakumar V."/>
            <person name="Chan A.P."/>
            <person name="Thibaud-Nissen F."/>
            <person name="Schobel S."/>
            <person name="Town C.D."/>
        </authorList>
    </citation>
    <scope>GENOME REANNOTATION</scope>
    <source>
        <strain>cv. Columbia</strain>
    </source>
</reference>
<reference key="4">
    <citation type="journal article" date="2003" name="Science">
        <title>Empirical analysis of transcriptional activity in the Arabidopsis genome.</title>
        <authorList>
            <person name="Yamada K."/>
            <person name="Lim J."/>
            <person name="Dale J.M."/>
            <person name="Chen H."/>
            <person name="Shinn P."/>
            <person name="Palm C.J."/>
            <person name="Southwick A.M."/>
            <person name="Wu H.C."/>
            <person name="Kim C.J."/>
            <person name="Nguyen M."/>
            <person name="Pham P.K."/>
            <person name="Cheuk R.F."/>
            <person name="Karlin-Newmann G."/>
            <person name="Liu S.X."/>
            <person name="Lam B."/>
            <person name="Sakano H."/>
            <person name="Wu T."/>
            <person name="Yu G."/>
            <person name="Miranda M."/>
            <person name="Quach H.L."/>
            <person name="Tripp M."/>
            <person name="Chang C.H."/>
            <person name="Lee J.M."/>
            <person name="Toriumi M.J."/>
            <person name="Chan M.M."/>
            <person name="Tang C.C."/>
            <person name="Onodera C.S."/>
            <person name="Deng J.M."/>
            <person name="Akiyama K."/>
            <person name="Ansari Y."/>
            <person name="Arakawa T."/>
            <person name="Banh J."/>
            <person name="Banno F."/>
            <person name="Bowser L."/>
            <person name="Brooks S.Y."/>
            <person name="Carninci P."/>
            <person name="Chao Q."/>
            <person name="Choy N."/>
            <person name="Enju A."/>
            <person name="Goldsmith A.D."/>
            <person name="Gurjal M."/>
            <person name="Hansen N.F."/>
            <person name="Hayashizaki Y."/>
            <person name="Johnson-Hopson C."/>
            <person name="Hsuan V.W."/>
            <person name="Iida K."/>
            <person name="Karnes M."/>
            <person name="Khan S."/>
            <person name="Koesema E."/>
            <person name="Ishida J."/>
            <person name="Jiang P.X."/>
            <person name="Jones T."/>
            <person name="Kawai J."/>
            <person name="Kamiya A."/>
            <person name="Meyers C."/>
            <person name="Nakajima M."/>
            <person name="Narusaka M."/>
            <person name="Seki M."/>
            <person name="Sakurai T."/>
            <person name="Satou M."/>
            <person name="Tamse R."/>
            <person name="Vaysberg M."/>
            <person name="Wallender E.K."/>
            <person name="Wong C."/>
            <person name="Yamamura Y."/>
            <person name="Yuan S."/>
            <person name="Shinozaki K."/>
            <person name="Davis R.W."/>
            <person name="Theologis A."/>
            <person name="Ecker J.R."/>
        </authorList>
    </citation>
    <scope>NUCLEOTIDE SEQUENCE [LARGE SCALE MRNA]</scope>
    <source>
        <strain>cv. Columbia</strain>
    </source>
</reference>
<reference key="5">
    <citation type="submission" date="2002-03" db="EMBL/GenBank/DDBJ databases">
        <title>Full-length cDNA from Arabidopsis thaliana.</title>
        <authorList>
            <person name="Brover V.V."/>
            <person name="Troukhan M.E."/>
            <person name="Alexandrov N.A."/>
            <person name="Lu Y.-P."/>
            <person name="Flavell R.B."/>
            <person name="Feldmann K.A."/>
        </authorList>
    </citation>
    <scope>NUCLEOTIDE SEQUENCE [LARGE SCALE MRNA]</scope>
</reference>
<reference key="6">
    <citation type="journal article" date="2003" name="Proc. Natl. Acad. Sci. U.S.A.">
        <title>The substrate specificity-determining amino acid code of 4-coumarate:CoA ligase.</title>
        <authorList>
            <person name="Schneider K."/>
            <person name="Hoevel K."/>
            <person name="Witzel K."/>
            <person name="Hamberger B."/>
            <person name="Schomburg D."/>
            <person name="Kombrink E."/>
            <person name="Stuible H.-P."/>
        </authorList>
    </citation>
    <scope>GENE FAMILY</scope>
</reference>
<reference key="7">
    <citation type="journal article" date="2012" name="Mol. Cell. Proteomics">
        <title>Comparative large-scale characterisation of plant vs. mammal proteins reveals similar and idiosyncratic N-alpha acetylation features.</title>
        <authorList>
            <person name="Bienvenut W.V."/>
            <person name="Sumpton D."/>
            <person name="Martinez A."/>
            <person name="Lilla S."/>
            <person name="Espagne C."/>
            <person name="Meinnel T."/>
            <person name="Giglione C."/>
        </authorList>
    </citation>
    <scope>ACETYLATION [LARGE SCALE ANALYSIS] AT MET-1</scope>
    <scope>IDENTIFICATION BY MASS SPECTROMETRY [LARGE SCALE ANALYSIS]</scope>
</reference>
<reference key="8">
    <citation type="journal article" date="2012" name="Plant Cell">
        <title>A previously unknown oxalyl-CoA synthetase is important for oxalate catabolism in Arabidopsis.</title>
        <authorList>
            <person name="Foster J."/>
            <person name="Kim H.U."/>
            <person name="Nakata P.A."/>
            <person name="Browse J."/>
        </authorList>
    </citation>
    <scope>FUNCTION</scope>
    <scope>CATALYTIC ACTIVITY</scope>
    <scope>BIOPHYSICOCHEMICAL PROPERTIES</scope>
    <scope>SUBCELLULAR LOCATION</scope>
    <scope>DISRUPTION PHENOTYPE</scope>
    <scope>INDUCTION BY PATHOGEN</scope>
    <source>
        <strain>cv. Columbia</strain>
    </source>
</reference>
<reference key="9">
    <citation type="journal article" date="2016" name="Mol. Plant">
        <title>Crystal structures of Arabidopsis thaliana oxalyl-CoA synthetase essential for oxalate degradation.</title>
        <authorList>
            <person name="Fan M."/>
            <person name="Xiao Y."/>
            <person name="Li M."/>
            <person name="Chang W."/>
        </authorList>
    </citation>
    <scope>X-RAY CRYSTALLOGRAPHY (1.85 ANGSTROMS) IN COMPLEX WITH ATP AND OXALIC ACID</scope>
    <scope>FUNCTION</scope>
    <scope>CATALYTIC ACTIVITY</scope>
    <scope>BIOPHYSICOCHEMICAL PROPERTIES</scope>
    <scope>MUTAGENESIS OF HIS-214; SER-289; HIS-319; ARG-409 AND LYS-500</scope>
</reference>
<accession>Q9SMT7</accession>
<accession>Q8L9Z5</accession>
<comment type="function">
    <text evidence="1 3 4">Oxalyl-CoA synthetase acting exclusively against oxalate (PubMed:22447686, PubMed:27326693). Follows a two-step reaction mechanism, wherein oxalate first undergoes adenylation by ATP, followed by a thioesterification in the presence of CoA to yield oxalyl-CoA (By similarity). No activity with malonate, succinate, malate, acetate, formate, lactate, glycolate, glyoxylate or glutarate (PubMed:22447686). Required for oxalate degradation, normal seed development and defense against oxalate-producing fungal pathogens (PubMed:22447686).</text>
</comment>
<comment type="catalytic activity">
    <reaction evidence="3 4">
        <text>oxalate + ATP + CoA = oxalyl-CoA + AMP + diphosphate</text>
        <dbReference type="Rhea" id="RHEA:18293"/>
        <dbReference type="ChEBI" id="CHEBI:30616"/>
        <dbReference type="ChEBI" id="CHEBI:30623"/>
        <dbReference type="ChEBI" id="CHEBI:33019"/>
        <dbReference type="ChEBI" id="CHEBI:57287"/>
        <dbReference type="ChEBI" id="CHEBI:57388"/>
        <dbReference type="ChEBI" id="CHEBI:456215"/>
        <dbReference type="EC" id="6.2.1.8"/>
    </reaction>
    <physiologicalReaction direction="left-to-right" evidence="8">
        <dbReference type="Rhea" id="RHEA:18294"/>
    </physiologicalReaction>
</comment>
<comment type="cofactor">
    <cofactor evidence="1">
        <name>Mg(2+)</name>
        <dbReference type="ChEBI" id="CHEBI:18420"/>
    </cofactor>
</comment>
<comment type="biophysicochemical properties">
    <kinetics>
        <KM evidence="4">42 uM for oxalate</KM>
        <KM evidence="3">149 uM for oxalate</KM>
        <Vmax evidence="4">13.8 umol/min/mg enzyme</Vmax>
        <Vmax evidence="3">11.4 umol/min/mg enzyme</Vmax>
    </kinetics>
    <phDependence>
        <text evidence="3">Optimum pH is 8.0.</text>
    </phDependence>
</comment>
<comment type="subcellular location">
    <subcellularLocation>
        <location evidence="3">Cytoplasm</location>
    </subcellularLocation>
</comment>
<comment type="induction">
    <text evidence="3">Up-regulated upon infection with oxalate-producing fungal pathogens.</text>
</comment>
<comment type="domain">
    <text evidence="2">Both substrate-binding domains (SBD1 and SBD2) are involved in the substrate recognition, and are sufficient to confer the substrate specificity.</text>
</comment>
<comment type="disruption phenotype">
    <text evidence="3">Decreased and delayed seed germination, but no other growth and development phenotypes. Increased sensitivity to oxalate-producing fungal pathogens.</text>
</comment>
<comment type="similarity">
    <text evidence="7">Belongs to the ATP-dependent AMP-binding enzyme family.</text>
</comment>
<name>4CLLA_ARATH</name>
<protein>
    <recommendedName>
        <fullName evidence="7">Oxalate--CoA ligase</fullName>
        <ecNumber evidence="3 4">6.2.1.8</ecNumber>
    </recommendedName>
    <alternativeName>
        <fullName>4-coumarate--CoA ligase isoform 8</fullName>
        <shortName>At4CL8</shortName>
    </alternativeName>
    <alternativeName>
        <fullName>4-coumarate--CoA ligase-like 10</fullName>
    </alternativeName>
    <alternativeName>
        <fullName evidence="6">Acyl-activating enzyme 3</fullName>
    </alternativeName>
    <alternativeName>
        <fullName evidence="5">Adenosine monophosphate binding protein 3</fullName>
        <shortName evidence="5">AtMPBP3</shortName>
    </alternativeName>
    <alternativeName>
        <fullName>Oxalyl-CoA synthetase</fullName>
    </alternativeName>
</protein>
<dbReference type="EC" id="6.2.1.8" evidence="3 4"/>
<dbReference type="EMBL" id="AF503762">
    <property type="protein sequence ID" value="AAM28620.1"/>
    <property type="molecule type" value="mRNA"/>
</dbReference>
<dbReference type="EMBL" id="AL132967">
    <property type="protein sequence ID" value="CAB62011.1"/>
    <property type="molecule type" value="Genomic_DNA"/>
</dbReference>
<dbReference type="EMBL" id="CP002686">
    <property type="protein sequence ID" value="AEE78480.1"/>
    <property type="molecule type" value="Genomic_DNA"/>
</dbReference>
<dbReference type="EMBL" id="AY050824">
    <property type="protein sequence ID" value="AAK92759.1"/>
    <property type="molecule type" value="mRNA"/>
</dbReference>
<dbReference type="EMBL" id="AY062759">
    <property type="protein sequence ID" value="AAL32837.1"/>
    <property type="molecule type" value="mRNA"/>
</dbReference>
<dbReference type="EMBL" id="AY117254">
    <property type="protein sequence ID" value="AAM51329.1"/>
    <property type="molecule type" value="mRNA"/>
</dbReference>
<dbReference type="EMBL" id="BT003376">
    <property type="protein sequence ID" value="AAO30039.1"/>
    <property type="molecule type" value="mRNA"/>
</dbReference>
<dbReference type="EMBL" id="AY088127">
    <property type="protein sequence ID" value="AAM65672.1"/>
    <property type="molecule type" value="mRNA"/>
</dbReference>
<dbReference type="PIR" id="T46131">
    <property type="entry name" value="T46131"/>
</dbReference>
<dbReference type="RefSeq" id="NP_190468.1">
    <property type="nucleotide sequence ID" value="NM_114758.5"/>
</dbReference>
<dbReference type="PDB" id="5IE0">
    <property type="method" value="X-ray"/>
    <property type="resolution" value="2.00 A"/>
    <property type="chains" value="A/B=1-514"/>
</dbReference>
<dbReference type="PDB" id="5IE2">
    <property type="method" value="X-ray"/>
    <property type="resolution" value="1.85 A"/>
    <property type="chains" value="A/B=1-514"/>
</dbReference>
<dbReference type="PDB" id="5IE3">
    <property type="method" value="X-ray"/>
    <property type="resolution" value="1.90 A"/>
    <property type="chains" value="A/B=1-514"/>
</dbReference>
<dbReference type="PDBsum" id="5IE0"/>
<dbReference type="PDBsum" id="5IE2"/>
<dbReference type="PDBsum" id="5IE3"/>
<dbReference type="SMR" id="Q9SMT7"/>
<dbReference type="BioGRID" id="9378">
    <property type="interactions" value="5"/>
</dbReference>
<dbReference type="FunCoup" id="Q9SMT7">
    <property type="interactions" value="302"/>
</dbReference>
<dbReference type="IntAct" id="Q9SMT7">
    <property type="interactions" value="1"/>
</dbReference>
<dbReference type="STRING" id="3702.Q9SMT7"/>
<dbReference type="iPTMnet" id="Q9SMT7"/>
<dbReference type="PaxDb" id="3702-AT3G48990.1"/>
<dbReference type="ProteomicsDB" id="244508"/>
<dbReference type="EnsemblPlants" id="AT3G48990.1">
    <property type="protein sequence ID" value="AT3G48990.1"/>
    <property type="gene ID" value="AT3G48990"/>
</dbReference>
<dbReference type="GeneID" id="824060"/>
<dbReference type="Gramene" id="AT3G48990.1">
    <property type="protein sequence ID" value="AT3G48990.1"/>
    <property type="gene ID" value="AT3G48990"/>
</dbReference>
<dbReference type="KEGG" id="ath:AT3G48990"/>
<dbReference type="Araport" id="AT3G48990"/>
<dbReference type="TAIR" id="AT3G48990">
    <property type="gene designation" value="AAE3"/>
</dbReference>
<dbReference type="eggNOG" id="KOG1176">
    <property type="taxonomic scope" value="Eukaryota"/>
</dbReference>
<dbReference type="HOGENOM" id="CLU_000022_59_0_1"/>
<dbReference type="InParanoid" id="Q9SMT7"/>
<dbReference type="OMA" id="TFRGYYR"/>
<dbReference type="OrthoDB" id="3633556at2759"/>
<dbReference type="PhylomeDB" id="Q9SMT7"/>
<dbReference type="BioCyc" id="ARA:AT3G48990-MONOMER"/>
<dbReference type="BioCyc" id="MetaCyc:AT3G48990-MONOMER"/>
<dbReference type="BRENDA" id="6.2.1.8">
    <property type="organism ID" value="399"/>
</dbReference>
<dbReference type="PRO" id="PR:Q9SMT7"/>
<dbReference type="Proteomes" id="UP000006548">
    <property type="component" value="Chromosome 3"/>
</dbReference>
<dbReference type="ExpressionAtlas" id="Q9SMT7">
    <property type="expression patterns" value="baseline and differential"/>
</dbReference>
<dbReference type="GO" id="GO:0048046">
    <property type="term" value="C:apoplast"/>
    <property type="evidence" value="ECO:0007005"/>
    <property type="project" value="TAIR"/>
</dbReference>
<dbReference type="GO" id="GO:0009507">
    <property type="term" value="C:chloroplast"/>
    <property type="evidence" value="ECO:0007005"/>
    <property type="project" value="TAIR"/>
</dbReference>
<dbReference type="GO" id="GO:0009570">
    <property type="term" value="C:chloroplast stroma"/>
    <property type="evidence" value="ECO:0007005"/>
    <property type="project" value="TAIR"/>
</dbReference>
<dbReference type="GO" id="GO:0005737">
    <property type="term" value="C:cytoplasm"/>
    <property type="evidence" value="ECO:0000314"/>
    <property type="project" value="TAIR"/>
</dbReference>
<dbReference type="GO" id="GO:0005829">
    <property type="term" value="C:cytosol"/>
    <property type="evidence" value="ECO:0007005"/>
    <property type="project" value="TAIR"/>
</dbReference>
<dbReference type="GO" id="GO:0009506">
    <property type="term" value="C:plasmodesma"/>
    <property type="evidence" value="ECO:0007005"/>
    <property type="project" value="TAIR"/>
</dbReference>
<dbReference type="GO" id="GO:0005524">
    <property type="term" value="F:ATP binding"/>
    <property type="evidence" value="ECO:0007669"/>
    <property type="project" value="UniProtKB-KW"/>
</dbReference>
<dbReference type="GO" id="GO:0050203">
    <property type="term" value="F:oxalate-CoA ligase activity"/>
    <property type="evidence" value="ECO:0000314"/>
    <property type="project" value="TAIR"/>
</dbReference>
<dbReference type="GO" id="GO:0050832">
    <property type="term" value="P:defense response to fungus"/>
    <property type="evidence" value="ECO:0000315"/>
    <property type="project" value="TAIR"/>
</dbReference>
<dbReference type="GO" id="GO:0033611">
    <property type="term" value="P:oxalate catabolic process"/>
    <property type="evidence" value="ECO:0000314"/>
    <property type="project" value="TAIR"/>
</dbReference>
<dbReference type="GO" id="GO:0010030">
    <property type="term" value="P:positive regulation of seed germination"/>
    <property type="evidence" value="ECO:0000315"/>
    <property type="project" value="TAIR"/>
</dbReference>
<dbReference type="GO" id="GO:0010214">
    <property type="term" value="P:seed coat development"/>
    <property type="evidence" value="ECO:0000315"/>
    <property type="project" value="TAIR"/>
</dbReference>
<dbReference type="CDD" id="cd05926">
    <property type="entry name" value="FACL_fum10p_like"/>
    <property type="match status" value="1"/>
</dbReference>
<dbReference type="FunFam" id="3.30.300.30:FF:000007">
    <property type="entry name" value="4-coumarate--CoA ligase 2"/>
    <property type="match status" value="1"/>
</dbReference>
<dbReference type="FunFam" id="3.40.50.12780:FF:000039">
    <property type="entry name" value="Peroxisomal-coenzyme A synthetase"/>
    <property type="match status" value="1"/>
</dbReference>
<dbReference type="Gene3D" id="3.30.300.30">
    <property type="match status" value="1"/>
</dbReference>
<dbReference type="Gene3D" id="3.40.50.12780">
    <property type="entry name" value="N-terminal domain of ligase-like"/>
    <property type="match status" value="1"/>
</dbReference>
<dbReference type="InterPro" id="IPR025110">
    <property type="entry name" value="AMP-bd_C"/>
</dbReference>
<dbReference type="InterPro" id="IPR045851">
    <property type="entry name" value="AMP-bd_C_sf"/>
</dbReference>
<dbReference type="InterPro" id="IPR020845">
    <property type="entry name" value="AMP-binding_CS"/>
</dbReference>
<dbReference type="InterPro" id="IPR000873">
    <property type="entry name" value="AMP-dep_synth/lig_dom"/>
</dbReference>
<dbReference type="InterPro" id="IPR042099">
    <property type="entry name" value="ANL_N_sf"/>
</dbReference>
<dbReference type="InterPro" id="IPR045310">
    <property type="entry name" value="Pcs60-like"/>
</dbReference>
<dbReference type="PANTHER" id="PTHR43201">
    <property type="entry name" value="ACYL-COA SYNTHETASE"/>
    <property type="match status" value="1"/>
</dbReference>
<dbReference type="PANTHER" id="PTHR43201:SF5">
    <property type="entry name" value="MEDIUM-CHAIN ACYL-COA LIGASE ACSF2, MITOCHONDRIAL"/>
    <property type="match status" value="1"/>
</dbReference>
<dbReference type="Pfam" id="PF00501">
    <property type="entry name" value="AMP-binding"/>
    <property type="match status" value="1"/>
</dbReference>
<dbReference type="Pfam" id="PF13193">
    <property type="entry name" value="AMP-binding_C"/>
    <property type="match status" value="1"/>
</dbReference>
<dbReference type="SUPFAM" id="SSF56801">
    <property type="entry name" value="Acetyl-CoA synthetase-like"/>
    <property type="match status" value="1"/>
</dbReference>
<dbReference type="PROSITE" id="PS00455">
    <property type="entry name" value="AMP_BINDING"/>
    <property type="match status" value="1"/>
</dbReference>
<gene>
    <name evidence="6" type="primary">AAE3</name>
    <name type="synonym">4CLL10</name>
    <name evidence="5" type="synonym">AMPBP3</name>
    <name evidence="9" type="ordered locus">At3g48990</name>
    <name evidence="10" type="ORF">T2J13.170</name>
</gene>
<keyword id="KW-0002">3D-structure</keyword>
<keyword id="KW-0007">Acetylation</keyword>
<keyword id="KW-0067">ATP-binding</keyword>
<keyword id="KW-0963">Cytoplasm</keyword>
<keyword id="KW-0436">Ligase</keyword>
<keyword id="KW-0460">Magnesium</keyword>
<keyword id="KW-0547">Nucleotide-binding</keyword>
<keyword id="KW-0611">Plant defense</keyword>
<keyword id="KW-1185">Reference proteome</keyword>
<organism>
    <name type="scientific">Arabidopsis thaliana</name>
    <name type="common">Mouse-ear cress</name>
    <dbReference type="NCBI Taxonomy" id="3702"/>
    <lineage>
        <taxon>Eukaryota</taxon>
        <taxon>Viridiplantae</taxon>
        <taxon>Streptophyta</taxon>
        <taxon>Embryophyta</taxon>
        <taxon>Tracheophyta</taxon>
        <taxon>Spermatophyta</taxon>
        <taxon>Magnoliopsida</taxon>
        <taxon>eudicotyledons</taxon>
        <taxon>Gunneridae</taxon>
        <taxon>Pentapetalae</taxon>
        <taxon>rosids</taxon>
        <taxon>malvids</taxon>
        <taxon>Brassicales</taxon>
        <taxon>Brassicaceae</taxon>
        <taxon>Camelineae</taxon>
        <taxon>Arabidopsis</taxon>
    </lineage>
</organism>
<proteinExistence type="evidence at protein level"/>
<feature type="chain" id="PRO_0000415617" description="Oxalate--CoA ligase">
    <location>
        <begin position="1"/>
        <end position="514"/>
    </location>
</feature>
<feature type="region of interest" description="SBD1" evidence="2">
    <location>
        <begin position="241"/>
        <end position="310"/>
    </location>
</feature>
<feature type="region of interest" description="SBD2" evidence="2">
    <location>
        <begin position="311"/>
        <end position="374"/>
    </location>
</feature>
<feature type="binding site" evidence="4 11 12">
    <location>
        <begin position="170"/>
        <end position="174"/>
    </location>
    <ligand>
        <name>ATP</name>
        <dbReference type="ChEBI" id="CHEBI:30616"/>
    </ligand>
</feature>
<feature type="binding site" evidence="4 11">
    <location>
        <position position="214"/>
    </location>
    <ligand>
        <name>ATP</name>
        <dbReference type="ChEBI" id="CHEBI:30616"/>
    </ligand>
</feature>
<feature type="binding site" evidence="1">
    <location>
        <position position="239"/>
    </location>
    <ligand>
        <name>CoA</name>
        <dbReference type="ChEBI" id="CHEBI:57287"/>
    </ligand>
</feature>
<feature type="binding site" evidence="4 11 12">
    <location>
        <begin position="289"/>
        <end position="291"/>
    </location>
    <ligand>
        <name>ATP</name>
        <dbReference type="ChEBI" id="CHEBI:30616"/>
    </ligand>
</feature>
<feature type="binding site" evidence="4 12">
    <location>
        <position position="289"/>
    </location>
    <ligand>
        <name>oxalate</name>
        <dbReference type="ChEBI" id="CHEBI:30623"/>
    </ligand>
</feature>
<feature type="binding site" evidence="4 11 12">
    <location>
        <begin position="310"/>
        <end position="311"/>
    </location>
    <ligand>
        <name>ATP</name>
        <dbReference type="ChEBI" id="CHEBI:30616"/>
    </ligand>
</feature>
<feature type="binding site" evidence="4 12">
    <location>
        <position position="314"/>
    </location>
    <ligand>
        <name>oxalate</name>
        <dbReference type="ChEBI" id="CHEBI:30623"/>
    </ligand>
</feature>
<feature type="binding site" evidence="4 11 12">
    <location>
        <position position="315"/>
    </location>
    <ligand>
        <name>ATP</name>
        <dbReference type="ChEBI" id="CHEBI:30616"/>
    </ligand>
</feature>
<feature type="binding site" evidence="4 12">
    <location>
        <position position="319"/>
    </location>
    <ligand>
        <name>oxalate</name>
        <dbReference type="ChEBI" id="CHEBI:30623"/>
    </ligand>
</feature>
<feature type="binding site" evidence="4 11 12">
    <location>
        <position position="394"/>
    </location>
    <ligand>
        <name>ATP</name>
        <dbReference type="ChEBI" id="CHEBI:30616"/>
    </ligand>
</feature>
<feature type="binding site" evidence="4 11">
    <location>
        <position position="409"/>
    </location>
    <ligand>
        <name>ATP</name>
        <dbReference type="ChEBI" id="CHEBI:30616"/>
    </ligand>
</feature>
<feature type="binding site" evidence="1">
    <location>
        <position position="418"/>
    </location>
    <ligand>
        <name>CoA</name>
        <dbReference type="ChEBI" id="CHEBI:57287"/>
    </ligand>
</feature>
<feature type="binding site" evidence="4 11 12">
    <location>
        <position position="500"/>
    </location>
    <ligand>
        <name>ATP</name>
        <dbReference type="ChEBI" id="CHEBI:30616"/>
    </ligand>
</feature>
<feature type="binding site" evidence="4 12">
    <location>
        <position position="500"/>
    </location>
    <ligand>
        <name>oxalate</name>
        <dbReference type="ChEBI" id="CHEBI:30623"/>
    </ligand>
</feature>
<feature type="modified residue" description="N-acetylmethionine" evidence="13">
    <location>
        <position position="1"/>
    </location>
</feature>
<feature type="mutagenesis site" description="Abolished activity." evidence="4">
    <original>H</original>
    <variation>A</variation>
    <location>
        <position position="214"/>
    </location>
</feature>
<feature type="mutagenesis site" description="Abolished activity." evidence="4">
    <original>S</original>
    <variation>A</variation>
    <location>
        <position position="289"/>
    </location>
</feature>
<feature type="mutagenesis site" description="Abolished activity." evidence="4">
    <original>H</original>
    <variation>A</variation>
    <location>
        <position position="319"/>
    </location>
</feature>
<feature type="mutagenesis site" description="Abolished activity." evidence="4">
    <original>R</original>
    <variation>A</variation>
    <location>
        <position position="409"/>
    </location>
</feature>
<feature type="mutagenesis site" description="Abolished activity." evidence="4">
    <original>K</original>
    <variation>A</variation>
    <location>
        <position position="500"/>
    </location>
</feature>
<feature type="sequence conflict" description="In Ref. 5; AAM65672." evidence="7" ref="5">
    <original>G</original>
    <variation>V</variation>
    <location>
        <position position="137"/>
    </location>
</feature>
<feature type="sequence conflict" description="In Ref. 5; AAM65672." evidence="7" ref="5">
    <original>V</original>
    <variation>F</variation>
    <location>
        <position position="209"/>
    </location>
</feature>
<feature type="helix" evidence="14">
    <location>
        <begin position="6"/>
        <end position="16"/>
    </location>
</feature>
<feature type="strand" evidence="14">
    <location>
        <begin position="20"/>
        <end position="25"/>
    </location>
</feature>
<feature type="turn" evidence="14">
    <location>
        <begin position="26"/>
        <end position="28"/>
    </location>
</feature>
<feature type="strand" evidence="14">
    <location>
        <begin position="29"/>
        <end position="32"/>
    </location>
</feature>
<feature type="helix" evidence="14">
    <location>
        <begin position="33"/>
        <end position="50"/>
    </location>
</feature>
<feature type="strand" evidence="14">
    <location>
        <begin position="58"/>
        <end position="61"/>
    </location>
</feature>
<feature type="helix" evidence="14">
    <location>
        <begin position="67"/>
        <end position="78"/>
    </location>
</feature>
<feature type="strand" evidence="14">
    <location>
        <begin position="82"/>
        <end position="85"/>
    </location>
</feature>
<feature type="helix" evidence="14">
    <location>
        <begin position="92"/>
        <end position="101"/>
    </location>
</feature>
<feature type="strand" evidence="14">
    <location>
        <begin position="104"/>
        <end position="112"/>
    </location>
</feature>
<feature type="helix" evidence="14">
    <location>
        <begin position="115"/>
        <end position="123"/>
    </location>
</feature>
<feature type="strand" evidence="14">
    <location>
        <begin position="127"/>
        <end position="132"/>
    </location>
</feature>
<feature type="strand" evidence="14">
    <location>
        <begin position="141"/>
        <end position="144"/>
    </location>
</feature>
<feature type="turn" evidence="14">
    <location>
        <begin position="153"/>
        <end position="156"/>
    </location>
</feature>
<feature type="strand" evidence="14">
    <location>
        <begin position="163"/>
        <end position="169"/>
    </location>
</feature>
<feature type="strand" evidence="14">
    <location>
        <begin position="173"/>
        <end position="176"/>
    </location>
</feature>
<feature type="strand" evidence="14">
    <location>
        <begin position="179"/>
        <end position="183"/>
    </location>
</feature>
<feature type="helix" evidence="14">
    <location>
        <begin position="184"/>
        <end position="198"/>
    </location>
</feature>
<feature type="strand" evidence="14">
    <location>
        <begin position="205"/>
        <end position="207"/>
    </location>
</feature>
<feature type="helix" evidence="14">
    <location>
        <begin position="215"/>
        <end position="219"/>
    </location>
</feature>
<feature type="turn" evidence="14">
    <location>
        <begin position="220"/>
        <end position="222"/>
    </location>
</feature>
<feature type="helix" evidence="14">
    <location>
        <begin position="223"/>
        <end position="227"/>
    </location>
</feature>
<feature type="strand" evidence="14">
    <location>
        <begin position="231"/>
        <end position="234"/>
    </location>
</feature>
<feature type="helix" evidence="14">
    <location>
        <begin position="242"/>
        <end position="251"/>
    </location>
</feature>
<feature type="strand" evidence="14">
    <location>
        <begin position="256"/>
        <end position="259"/>
    </location>
</feature>
<feature type="helix" evidence="14">
    <location>
        <begin position="261"/>
        <end position="273"/>
    </location>
</feature>
<feature type="strand" evidence="14">
    <location>
        <begin position="283"/>
        <end position="287"/>
    </location>
</feature>
<feature type="helix" evidence="14">
    <location>
        <begin position="294"/>
        <end position="304"/>
    </location>
</feature>
<feature type="strand" evidence="14">
    <location>
        <begin position="308"/>
        <end position="314"/>
    </location>
</feature>
<feature type="helix" evidence="14">
    <location>
        <begin position="315"/>
        <end position="317"/>
    </location>
</feature>
<feature type="strand" evidence="14">
    <location>
        <begin position="319"/>
        <end position="323"/>
    </location>
</feature>
<feature type="turn" evidence="14">
    <location>
        <begin position="327"/>
        <end position="329"/>
    </location>
</feature>
<feature type="strand" evidence="14">
    <location>
        <begin position="338"/>
        <end position="340"/>
    </location>
</feature>
<feature type="strand" evidence="14">
    <location>
        <begin position="342"/>
        <end position="348"/>
    </location>
</feature>
<feature type="strand" evidence="14">
    <location>
        <begin position="361"/>
        <end position="367"/>
    </location>
</feature>
<feature type="helix" evidence="14">
    <location>
        <begin position="378"/>
        <end position="384"/>
    </location>
</feature>
<feature type="strand" evidence="14">
    <location>
        <begin position="389"/>
        <end position="398"/>
    </location>
</feature>
<feature type="strand" evidence="14">
    <location>
        <begin position="404"/>
        <end position="409"/>
    </location>
</feature>
<feature type="helix" evidence="14">
    <location>
        <begin position="410"/>
        <end position="412"/>
    </location>
</feature>
<feature type="strand" evidence="14">
    <location>
        <begin position="414"/>
        <end position="416"/>
    </location>
</feature>
<feature type="strand" evidence="14">
    <location>
        <begin position="419"/>
        <end position="421"/>
    </location>
</feature>
<feature type="helix" evidence="14">
    <location>
        <begin position="423"/>
        <end position="430"/>
    </location>
</feature>
<feature type="strand" evidence="14">
    <location>
        <begin position="436"/>
        <end position="446"/>
    </location>
</feature>
<feature type="turn" evidence="14">
    <location>
        <begin position="447"/>
        <end position="449"/>
    </location>
</feature>
<feature type="strand" evidence="14">
    <location>
        <begin position="450"/>
        <end position="459"/>
    </location>
</feature>
<feature type="helix" evidence="14">
    <location>
        <begin position="467"/>
        <end position="477"/>
    </location>
</feature>
<feature type="helix" evidence="14">
    <location>
        <begin position="480"/>
        <end position="482"/>
    </location>
</feature>
<feature type="strand" evidence="14">
    <location>
        <begin position="487"/>
        <end position="489"/>
    </location>
</feature>
<feature type="helix" evidence="14">
    <location>
        <begin position="503"/>
        <end position="510"/>
    </location>
</feature>